<proteinExistence type="inferred from homology"/>
<dbReference type="EMBL" id="CU928163">
    <property type="protein sequence ID" value="CAR14187.1"/>
    <property type="molecule type" value="Genomic_DNA"/>
</dbReference>
<dbReference type="RefSeq" id="WP_000906486.1">
    <property type="nucleotide sequence ID" value="NC_011751.1"/>
</dbReference>
<dbReference type="RefSeq" id="YP_002413709.1">
    <property type="nucleotide sequence ID" value="NC_011751.1"/>
</dbReference>
<dbReference type="SMR" id="B7N6S6"/>
<dbReference type="STRING" id="585056.ECUMN_3017"/>
<dbReference type="GeneID" id="98389839"/>
<dbReference type="KEGG" id="eum:ECUMN_3017"/>
<dbReference type="PATRIC" id="fig|585056.7.peg.3193"/>
<dbReference type="HOGENOM" id="CLU_164837_2_1_6"/>
<dbReference type="PRO" id="PR:B7N6S6"/>
<dbReference type="Proteomes" id="UP000007097">
    <property type="component" value="Chromosome"/>
</dbReference>
<dbReference type="GO" id="GO:0005829">
    <property type="term" value="C:cytosol"/>
    <property type="evidence" value="ECO:0007669"/>
    <property type="project" value="TreeGrafter"/>
</dbReference>
<dbReference type="GO" id="GO:0048027">
    <property type="term" value="F:mRNA 5'-UTR binding"/>
    <property type="evidence" value="ECO:0007669"/>
    <property type="project" value="UniProtKB-UniRule"/>
</dbReference>
<dbReference type="GO" id="GO:0006402">
    <property type="term" value="P:mRNA catabolic process"/>
    <property type="evidence" value="ECO:0007669"/>
    <property type="project" value="InterPro"/>
</dbReference>
<dbReference type="GO" id="GO:0045947">
    <property type="term" value="P:negative regulation of translational initiation"/>
    <property type="evidence" value="ECO:0007669"/>
    <property type="project" value="UniProtKB-UniRule"/>
</dbReference>
<dbReference type="GO" id="GO:0045948">
    <property type="term" value="P:positive regulation of translational initiation"/>
    <property type="evidence" value="ECO:0007669"/>
    <property type="project" value="UniProtKB-UniRule"/>
</dbReference>
<dbReference type="GO" id="GO:0006109">
    <property type="term" value="P:regulation of carbohydrate metabolic process"/>
    <property type="evidence" value="ECO:0007669"/>
    <property type="project" value="UniProtKB-UniRule"/>
</dbReference>
<dbReference type="FunFam" id="2.60.40.4380:FF:000001">
    <property type="entry name" value="Translational regulator CsrA"/>
    <property type="match status" value="1"/>
</dbReference>
<dbReference type="Gene3D" id="2.60.40.4380">
    <property type="entry name" value="Translational regulator CsrA"/>
    <property type="match status" value="1"/>
</dbReference>
<dbReference type="HAMAP" id="MF_00167">
    <property type="entry name" value="CsrA"/>
    <property type="match status" value="1"/>
</dbReference>
<dbReference type="InterPro" id="IPR003751">
    <property type="entry name" value="CsrA"/>
</dbReference>
<dbReference type="InterPro" id="IPR036107">
    <property type="entry name" value="CsrA_sf"/>
</dbReference>
<dbReference type="NCBIfam" id="TIGR00202">
    <property type="entry name" value="csrA"/>
    <property type="match status" value="1"/>
</dbReference>
<dbReference type="NCBIfam" id="NF002469">
    <property type="entry name" value="PRK01712.1"/>
    <property type="match status" value="1"/>
</dbReference>
<dbReference type="PANTHER" id="PTHR34984">
    <property type="entry name" value="CARBON STORAGE REGULATOR"/>
    <property type="match status" value="1"/>
</dbReference>
<dbReference type="PANTHER" id="PTHR34984:SF1">
    <property type="entry name" value="CARBON STORAGE REGULATOR"/>
    <property type="match status" value="1"/>
</dbReference>
<dbReference type="Pfam" id="PF02599">
    <property type="entry name" value="CsrA"/>
    <property type="match status" value="1"/>
</dbReference>
<dbReference type="SUPFAM" id="SSF117130">
    <property type="entry name" value="CsrA-like"/>
    <property type="match status" value="1"/>
</dbReference>
<feature type="chain" id="PRO_1000118237" description="Translational regulator CsrA">
    <location>
        <begin position="1"/>
        <end position="61"/>
    </location>
</feature>
<organism>
    <name type="scientific">Escherichia coli O17:K52:H18 (strain UMN026 / ExPEC)</name>
    <dbReference type="NCBI Taxonomy" id="585056"/>
    <lineage>
        <taxon>Bacteria</taxon>
        <taxon>Pseudomonadati</taxon>
        <taxon>Pseudomonadota</taxon>
        <taxon>Gammaproteobacteria</taxon>
        <taxon>Enterobacterales</taxon>
        <taxon>Enterobacteriaceae</taxon>
        <taxon>Escherichia</taxon>
    </lineage>
</organism>
<sequence>MLILTRRVGETLMIGDEVTVTVLGVKGNQVRIGVNAPKEVSVHREEIYQRIQAEKSQQSSY</sequence>
<evidence type="ECO:0000255" key="1">
    <source>
        <dbReference type="HAMAP-Rule" id="MF_00167"/>
    </source>
</evidence>
<protein>
    <recommendedName>
        <fullName evidence="1">Translational regulator CsrA</fullName>
    </recommendedName>
    <alternativeName>
        <fullName evidence="1">Carbon storage regulator</fullName>
    </alternativeName>
</protein>
<reference key="1">
    <citation type="journal article" date="2009" name="PLoS Genet.">
        <title>Organised genome dynamics in the Escherichia coli species results in highly diverse adaptive paths.</title>
        <authorList>
            <person name="Touchon M."/>
            <person name="Hoede C."/>
            <person name="Tenaillon O."/>
            <person name="Barbe V."/>
            <person name="Baeriswyl S."/>
            <person name="Bidet P."/>
            <person name="Bingen E."/>
            <person name="Bonacorsi S."/>
            <person name="Bouchier C."/>
            <person name="Bouvet O."/>
            <person name="Calteau A."/>
            <person name="Chiapello H."/>
            <person name="Clermont O."/>
            <person name="Cruveiller S."/>
            <person name="Danchin A."/>
            <person name="Diard M."/>
            <person name="Dossat C."/>
            <person name="Karoui M.E."/>
            <person name="Frapy E."/>
            <person name="Garry L."/>
            <person name="Ghigo J.M."/>
            <person name="Gilles A.M."/>
            <person name="Johnson J."/>
            <person name="Le Bouguenec C."/>
            <person name="Lescat M."/>
            <person name="Mangenot S."/>
            <person name="Martinez-Jehanne V."/>
            <person name="Matic I."/>
            <person name="Nassif X."/>
            <person name="Oztas S."/>
            <person name="Petit M.A."/>
            <person name="Pichon C."/>
            <person name="Rouy Z."/>
            <person name="Ruf C.S."/>
            <person name="Schneider D."/>
            <person name="Tourret J."/>
            <person name="Vacherie B."/>
            <person name="Vallenet D."/>
            <person name="Medigue C."/>
            <person name="Rocha E.P.C."/>
            <person name="Denamur E."/>
        </authorList>
    </citation>
    <scope>NUCLEOTIDE SEQUENCE [LARGE SCALE GENOMIC DNA]</scope>
    <source>
        <strain>UMN026 / ExPEC</strain>
    </source>
</reference>
<keyword id="KW-0010">Activator</keyword>
<keyword id="KW-0963">Cytoplasm</keyword>
<keyword id="KW-0678">Repressor</keyword>
<keyword id="KW-0694">RNA-binding</keyword>
<keyword id="KW-0810">Translation regulation</keyword>
<accession>B7N6S6</accession>
<name>CSRA_ECOLU</name>
<comment type="function">
    <text evidence="1">A key translational regulator that binds mRNA to regulate translation initiation and/or mRNA stability. Mediates global changes in gene expression, shifting from rapid growth to stress survival by linking envelope stress, the stringent response and the catabolite repression systems. Usually binds in the 5'-UTR; binding at or near the Shine-Dalgarno sequence prevents ribosome-binding, repressing translation, binding elsewhere in the 5'-UTR can activate translation and/or stabilize the mRNA. Its function is antagonized by small RNA(s).</text>
</comment>
<comment type="subunit">
    <text evidence="1">Homodimer; the beta-strands of each monomer intercalate to form a hydrophobic core, while the alpha-helices form wings that extend away from the core.</text>
</comment>
<comment type="subcellular location">
    <subcellularLocation>
        <location evidence="1">Cytoplasm</location>
    </subcellularLocation>
</comment>
<comment type="similarity">
    <text evidence="1">Belongs to the CsrA/RsmA family.</text>
</comment>
<gene>
    <name evidence="1" type="primary">csrA</name>
    <name type="ordered locus">ECUMN_3017</name>
</gene>